<proteinExistence type="inferred from homology"/>
<organism>
    <name type="scientific">Caulobacter vibrioides (strain ATCC 19089 / CIP 103742 / CB 15)</name>
    <name type="common">Caulobacter crescentus</name>
    <dbReference type="NCBI Taxonomy" id="190650"/>
    <lineage>
        <taxon>Bacteria</taxon>
        <taxon>Pseudomonadati</taxon>
        <taxon>Pseudomonadota</taxon>
        <taxon>Alphaproteobacteria</taxon>
        <taxon>Caulobacterales</taxon>
        <taxon>Caulobacteraceae</taxon>
        <taxon>Caulobacter</taxon>
    </lineage>
</organism>
<feature type="chain" id="PRO_0000215062" description="PF03932 family protein CutC">
    <location>
        <begin position="1"/>
        <end position="245"/>
    </location>
</feature>
<keyword id="KW-0963">Cytoplasm</keyword>
<keyword id="KW-1185">Reference proteome</keyword>
<sequence length="245" mass="25306">MSAHRVLLEVCVDTPAGLAAAIAGGADRVELCSALALQGLTPAPGLMAQAASAPIPVYPMIRPRHGDFCYDARDLDAMRRDIDAVRGYGLPGVTIGASQANGALDLKVLRKLVEQAEGLGTTLHRAFDVVPDMSEALEIAVELGFERVLTSGGALSALDATDRLAALVEQAGERISIMAGAGVRPGNIAELVRRTGVREAHGSFGGPVPGADPRSQLGAMGFVPPELRDTSQAAVAEAVKALRAL</sequence>
<protein>
    <recommendedName>
        <fullName evidence="1">PF03932 family protein CutC</fullName>
    </recommendedName>
</protein>
<comment type="subcellular location">
    <subcellularLocation>
        <location evidence="1">Cytoplasm</location>
    </subcellularLocation>
</comment>
<comment type="similarity">
    <text evidence="1">Belongs to the CutC family.</text>
</comment>
<comment type="caution">
    <text evidence="1">Once thought to be involved in copper homeostasis, experiments in E.coli have shown this is not the case.</text>
</comment>
<name>CUTC_CAUVC</name>
<reference key="1">
    <citation type="journal article" date="2001" name="Proc. Natl. Acad. Sci. U.S.A.">
        <title>Complete genome sequence of Caulobacter crescentus.</title>
        <authorList>
            <person name="Nierman W.C."/>
            <person name="Feldblyum T.V."/>
            <person name="Laub M.T."/>
            <person name="Paulsen I.T."/>
            <person name="Nelson K.E."/>
            <person name="Eisen J.A."/>
            <person name="Heidelberg J.F."/>
            <person name="Alley M.R.K."/>
            <person name="Ohta N."/>
            <person name="Maddock J.R."/>
            <person name="Potocka I."/>
            <person name="Nelson W.C."/>
            <person name="Newton A."/>
            <person name="Stephens C."/>
            <person name="Phadke N.D."/>
            <person name="Ely B."/>
            <person name="DeBoy R.T."/>
            <person name="Dodson R.J."/>
            <person name="Durkin A.S."/>
            <person name="Gwinn M.L."/>
            <person name="Haft D.H."/>
            <person name="Kolonay J.F."/>
            <person name="Smit J."/>
            <person name="Craven M.B."/>
            <person name="Khouri H.M."/>
            <person name="Shetty J."/>
            <person name="Berry K.J."/>
            <person name="Utterback T.R."/>
            <person name="Tran K."/>
            <person name="Wolf A.M."/>
            <person name="Vamathevan J.J."/>
            <person name="Ermolaeva M.D."/>
            <person name="White O."/>
            <person name="Salzberg S.L."/>
            <person name="Venter J.C."/>
            <person name="Shapiro L."/>
            <person name="Fraser C.M."/>
        </authorList>
    </citation>
    <scope>NUCLEOTIDE SEQUENCE [LARGE SCALE GENOMIC DNA]</scope>
    <source>
        <strain>ATCC 19089 / CIP 103742 / CB 15</strain>
    </source>
</reference>
<dbReference type="EMBL" id="AE005673">
    <property type="protein sequence ID" value="AAK24331.1"/>
    <property type="molecule type" value="Genomic_DNA"/>
</dbReference>
<dbReference type="PIR" id="G87541">
    <property type="entry name" value="G87541"/>
</dbReference>
<dbReference type="RefSeq" id="NP_421163.1">
    <property type="nucleotide sequence ID" value="NC_002696.2"/>
</dbReference>
<dbReference type="RefSeq" id="WP_010920218.1">
    <property type="nucleotide sequence ID" value="NC_002696.2"/>
</dbReference>
<dbReference type="SMR" id="Q9A5T7"/>
<dbReference type="STRING" id="190650.CC_2360"/>
<dbReference type="EnsemblBacteria" id="AAK24331">
    <property type="protein sequence ID" value="AAK24331"/>
    <property type="gene ID" value="CC_2360"/>
</dbReference>
<dbReference type="KEGG" id="ccr:CC_2360"/>
<dbReference type="PATRIC" id="fig|190650.5.peg.2381"/>
<dbReference type="eggNOG" id="COG3142">
    <property type="taxonomic scope" value="Bacteria"/>
</dbReference>
<dbReference type="HOGENOM" id="CLU_050555_3_3_5"/>
<dbReference type="BioCyc" id="CAULO:CC2360-MONOMER"/>
<dbReference type="Proteomes" id="UP000001816">
    <property type="component" value="Chromosome"/>
</dbReference>
<dbReference type="GO" id="GO:0005737">
    <property type="term" value="C:cytoplasm"/>
    <property type="evidence" value="ECO:0007669"/>
    <property type="project" value="UniProtKB-SubCell"/>
</dbReference>
<dbReference type="GO" id="GO:0005507">
    <property type="term" value="F:copper ion binding"/>
    <property type="evidence" value="ECO:0007669"/>
    <property type="project" value="TreeGrafter"/>
</dbReference>
<dbReference type="Gene3D" id="3.20.20.380">
    <property type="entry name" value="Copper homeostasis (CutC) domain"/>
    <property type="match status" value="1"/>
</dbReference>
<dbReference type="HAMAP" id="MF_00795">
    <property type="entry name" value="CutC"/>
    <property type="match status" value="1"/>
</dbReference>
<dbReference type="InterPro" id="IPR005627">
    <property type="entry name" value="CutC-like"/>
</dbReference>
<dbReference type="InterPro" id="IPR036822">
    <property type="entry name" value="CutC-like_dom_sf"/>
</dbReference>
<dbReference type="PANTHER" id="PTHR12598">
    <property type="entry name" value="COPPER HOMEOSTASIS PROTEIN CUTC"/>
    <property type="match status" value="1"/>
</dbReference>
<dbReference type="PANTHER" id="PTHR12598:SF0">
    <property type="entry name" value="COPPER HOMEOSTASIS PROTEIN CUTC HOMOLOG"/>
    <property type="match status" value="1"/>
</dbReference>
<dbReference type="Pfam" id="PF03932">
    <property type="entry name" value="CutC"/>
    <property type="match status" value="1"/>
</dbReference>
<dbReference type="SUPFAM" id="SSF110395">
    <property type="entry name" value="CutC-like"/>
    <property type="match status" value="1"/>
</dbReference>
<evidence type="ECO:0000255" key="1">
    <source>
        <dbReference type="HAMAP-Rule" id="MF_00795"/>
    </source>
</evidence>
<gene>
    <name evidence="1" type="primary">cutC</name>
    <name type="ordered locus">CC_2360</name>
</gene>
<accession>Q9A5T7</accession>